<organism>
    <name type="scientific">Escherichia coli O157:H7</name>
    <dbReference type="NCBI Taxonomy" id="83334"/>
    <lineage>
        <taxon>Bacteria</taxon>
        <taxon>Pseudomonadati</taxon>
        <taxon>Pseudomonadota</taxon>
        <taxon>Gammaproteobacteria</taxon>
        <taxon>Enterobacterales</taxon>
        <taxon>Enterobacteriaceae</taxon>
        <taxon>Escherichia</taxon>
    </lineage>
</organism>
<comment type="function">
    <text evidence="1">Part of a membrane-bound complex that couples electron transfer with translocation of ions across the membrane. Required to maintain the reduced state of SoxR.</text>
</comment>
<comment type="cofactor">
    <cofactor evidence="1">
        <name>[4Fe-4S] cluster</name>
        <dbReference type="ChEBI" id="CHEBI:49883"/>
    </cofactor>
    <text evidence="1">Binds 3 [4Fe-4S] clusters.</text>
</comment>
<comment type="subunit">
    <text evidence="1">The complex is composed of six subunits: RsxA, RsxB, RsxC, RsxD, RsxE and RsxG.</text>
</comment>
<comment type="subcellular location">
    <subcellularLocation>
        <location evidence="1">Cell inner membrane</location>
    </subcellularLocation>
</comment>
<comment type="similarity">
    <text evidence="1">Belongs to the 4Fe4S bacterial-type ferredoxin family. RnfB subfamily.</text>
</comment>
<evidence type="ECO:0000255" key="1">
    <source>
        <dbReference type="HAMAP-Rule" id="MF_00463"/>
    </source>
</evidence>
<feature type="chain" id="PRO_0000216272" description="Ion-translocating oxidoreductase complex subunit B">
    <location>
        <begin position="1"/>
        <end position="192"/>
    </location>
</feature>
<feature type="domain" description="4Fe-4S" evidence="1">
    <location>
        <begin position="32"/>
        <end position="91"/>
    </location>
</feature>
<feature type="domain" description="4Fe-4S ferredoxin-type 1" evidence="1">
    <location>
        <begin position="108"/>
        <end position="137"/>
    </location>
</feature>
<feature type="domain" description="4Fe-4S ferredoxin-type 2" evidence="1">
    <location>
        <begin position="138"/>
        <end position="167"/>
    </location>
</feature>
<feature type="region of interest" description="Hydrophobic" evidence="1">
    <location>
        <begin position="1"/>
        <end position="26"/>
    </location>
</feature>
<feature type="binding site" evidence="1">
    <location>
        <position position="49"/>
    </location>
    <ligand>
        <name>[4Fe-4S] cluster</name>
        <dbReference type="ChEBI" id="CHEBI:49883"/>
        <label>1</label>
    </ligand>
</feature>
<feature type="binding site" evidence="1">
    <location>
        <position position="52"/>
    </location>
    <ligand>
        <name>[4Fe-4S] cluster</name>
        <dbReference type="ChEBI" id="CHEBI:49883"/>
        <label>1</label>
    </ligand>
</feature>
<feature type="binding site" evidence="1">
    <location>
        <position position="57"/>
    </location>
    <ligand>
        <name>[4Fe-4S] cluster</name>
        <dbReference type="ChEBI" id="CHEBI:49883"/>
        <label>1</label>
    </ligand>
</feature>
<feature type="binding site" evidence="1">
    <location>
        <position position="74"/>
    </location>
    <ligand>
        <name>[4Fe-4S] cluster</name>
        <dbReference type="ChEBI" id="CHEBI:49883"/>
        <label>1</label>
    </ligand>
</feature>
<feature type="binding site" evidence="1">
    <location>
        <position position="117"/>
    </location>
    <ligand>
        <name>[4Fe-4S] cluster</name>
        <dbReference type="ChEBI" id="CHEBI:49883"/>
        <label>2</label>
    </ligand>
</feature>
<feature type="binding site" evidence="1">
    <location>
        <position position="120"/>
    </location>
    <ligand>
        <name>[4Fe-4S] cluster</name>
        <dbReference type="ChEBI" id="CHEBI:49883"/>
        <label>2</label>
    </ligand>
</feature>
<feature type="binding site" evidence="1">
    <location>
        <position position="123"/>
    </location>
    <ligand>
        <name>[4Fe-4S] cluster</name>
        <dbReference type="ChEBI" id="CHEBI:49883"/>
        <label>2</label>
    </ligand>
</feature>
<feature type="binding site" evidence="1">
    <location>
        <position position="127"/>
    </location>
    <ligand>
        <name>[4Fe-4S] cluster</name>
        <dbReference type="ChEBI" id="CHEBI:49883"/>
        <label>3</label>
    </ligand>
</feature>
<feature type="binding site" evidence="1">
    <location>
        <position position="147"/>
    </location>
    <ligand>
        <name>[4Fe-4S] cluster</name>
        <dbReference type="ChEBI" id="CHEBI:49883"/>
        <label>3</label>
    </ligand>
</feature>
<feature type="binding site" evidence="1">
    <location>
        <position position="150"/>
    </location>
    <ligand>
        <name>[4Fe-4S] cluster</name>
        <dbReference type="ChEBI" id="CHEBI:49883"/>
        <label>3</label>
    </ligand>
</feature>
<feature type="binding site" evidence="1">
    <location>
        <position position="153"/>
    </location>
    <ligand>
        <name>[4Fe-4S] cluster</name>
        <dbReference type="ChEBI" id="CHEBI:49883"/>
        <label>3</label>
    </ligand>
</feature>
<feature type="binding site" evidence="1">
    <location>
        <position position="157"/>
    </location>
    <ligand>
        <name>[4Fe-4S] cluster</name>
        <dbReference type="ChEBI" id="CHEBI:49883"/>
        <label>2</label>
    </ligand>
</feature>
<name>RSXB_ECO57</name>
<protein>
    <recommendedName>
        <fullName evidence="1">Ion-translocating oxidoreductase complex subunit B</fullName>
        <ecNumber evidence="1">7.-.-.-</ecNumber>
    </recommendedName>
    <alternativeName>
        <fullName evidence="1">Rsx electron transport complex subunit B</fullName>
    </alternativeName>
</protein>
<accession>P58323</accession>
<gene>
    <name evidence="1" type="primary">rsxB</name>
    <name type="ordered locus">Z2634</name>
    <name type="ordered locus">ECs2337</name>
</gene>
<proteinExistence type="inferred from homology"/>
<reference key="1">
    <citation type="journal article" date="2001" name="Nature">
        <title>Genome sequence of enterohaemorrhagic Escherichia coli O157:H7.</title>
        <authorList>
            <person name="Perna N.T."/>
            <person name="Plunkett G. III"/>
            <person name="Burland V."/>
            <person name="Mau B."/>
            <person name="Glasner J.D."/>
            <person name="Rose D.J."/>
            <person name="Mayhew G.F."/>
            <person name="Evans P.S."/>
            <person name="Gregor J."/>
            <person name="Kirkpatrick H.A."/>
            <person name="Posfai G."/>
            <person name="Hackett J."/>
            <person name="Klink S."/>
            <person name="Boutin A."/>
            <person name="Shao Y."/>
            <person name="Miller L."/>
            <person name="Grotbeck E.J."/>
            <person name="Davis N.W."/>
            <person name="Lim A."/>
            <person name="Dimalanta E.T."/>
            <person name="Potamousis K."/>
            <person name="Apodaca J."/>
            <person name="Anantharaman T.S."/>
            <person name="Lin J."/>
            <person name="Yen G."/>
            <person name="Schwartz D.C."/>
            <person name="Welch R.A."/>
            <person name="Blattner F.R."/>
        </authorList>
    </citation>
    <scope>NUCLEOTIDE SEQUENCE [LARGE SCALE GENOMIC DNA]</scope>
    <source>
        <strain>O157:H7 / EDL933 / ATCC 700927 / EHEC</strain>
    </source>
</reference>
<reference key="2">
    <citation type="journal article" date="2001" name="DNA Res.">
        <title>Complete genome sequence of enterohemorrhagic Escherichia coli O157:H7 and genomic comparison with a laboratory strain K-12.</title>
        <authorList>
            <person name="Hayashi T."/>
            <person name="Makino K."/>
            <person name="Ohnishi M."/>
            <person name="Kurokawa K."/>
            <person name="Ishii K."/>
            <person name="Yokoyama K."/>
            <person name="Han C.-G."/>
            <person name="Ohtsubo E."/>
            <person name="Nakayama K."/>
            <person name="Murata T."/>
            <person name="Tanaka M."/>
            <person name="Tobe T."/>
            <person name="Iida T."/>
            <person name="Takami H."/>
            <person name="Honda T."/>
            <person name="Sasakawa C."/>
            <person name="Ogasawara N."/>
            <person name="Yasunaga T."/>
            <person name="Kuhara S."/>
            <person name="Shiba T."/>
            <person name="Hattori M."/>
            <person name="Shinagawa H."/>
        </authorList>
    </citation>
    <scope>NUCLEOTIDE SEQUENCE [LARGE SCALE GENOMIC DNA]</scope>
    <source>
        <strain>O157:H7 / Sakai / RIMD 0509952 / EHEC</strain>
    </source>
</reference>
<sequence>MNAIWIAVAAVSLLGLAFGAILGYASRRFAVEDDPVVEKIDEILPQSQCGQCGYPGCRPYAEAISCNGEKINRCAPGGEAVMLKIAELLNVEPQPLDGEAQELTPARMVAVIDENNCIGCTKCIQACPVDAIVGATRAMHTVMSDLCTGCNLCVDPCPTHCISLQPVAETPDSWKWDLNTIPVRIIPVEHHA</sequence>
<dbReference type="EC" id="7.-.-.-" evidence="1"/>
<dbReference type="EMBL" id="AE005174">
    <property type="protein sequence ID" value="AAG56617.1"/>
    <property type="molecule type" value="Genomic_DNA"/>
</dbReference>
<dbReference type="EMBL" id="BA000007">
    <property type="protein sequence ID" value="BAB35760.1"/>
    <property type="molecule type" value="Genomic_DNA"/>
</dbReference>
<dbReference type="PIR" id="A99921">
    <property type="entry name" value="A99921"/>
</dbReference>
<dbReference type="PIR" id="E85769">
    <property type="entry name" value="E85769"/>
</dbReference>
<dbReference type="RefSeq" id="NP_310364.1">
    <property type="nucleotide sequence ID" value="NC_002695.1"/>
</dbReference>
<dbReference type="RefSeq" id="WP_000991809.1">
    <property type="nucleotide sequence ID" value="NZ_VOAI01000007.1"/>
</dbReference>
<dbReference type="STRING" id="155864.Z2634"/>
<dbReference type="GeneID" id="912556"/>
<dbReference type="GeneID" id="93775780"/>
<dbReference type="KEGG" id="ece:Z2634"/>
<dbReference type="KEGG" id="ecs:ECs_2337"/>
<dbReference type="PATRIC" id="fig|386585.9.peg.2446"/>
<dbReference type="eggNOG" id="COG2878">
    <property type="taxonomic scope" value="Bacteria"/>
</dbReference>
<dbReference type="HOGENOM" id="CLU_063448_2_0_6"/>
<dbReference type="OMA" id="ITKCVPG"/>
<dbReference type="Proteomes" id="UP000000558">
    <property type="component" value="Chromosome"/>
</dbReference>
<dbReference type="Proteomes" id="UP000002519">
    <property type="component" value="Chromosome"/>
</dbReference>
<dbReference type="GO" id="GO:0005886">
    <property type="term" value="C:plasma membrane"/>
    <property type="evidence" value="ECO:0007669"/>
    <property type="project" value="UniProtKB-SubCell"/>
</dbReference>
<dbReference type="GO" id="GO:0051539">
    <property type="term" value="F:4 iron, 4 sulfur cluster binding"/>
    <property type="evidence" value="ECO:0007669"/>
    <property type="project" value="UniProtKB-UniRule"/>
</dbReference>
<dbReference type="GO" id="GO:0009055">
    <property type="term" value="F:electron transfer activity"/>
    <property type="evidence" value="ECO:0007669"/>
    <property type="project" value="InterPro"/>
</dbReference>
<dbReference type="GO" id="GO:0046872">
    <property type="term" value="F:metal ion binding"/>
    <property type="evidence" value="ECO:0007669"/>
    <property type="project" value="UniProtKB-KW"/>
</dbReference>
<dbReference type="GO" id="GO:0022900">
    <property type="term" value="P:electron transport chain"/>
    <property type="evidence" value="ECO:0007669"/>
    <property type="project" value="UniProtKB-UniRule"/>
</dbReference>
<dbReference type="FunFam" id="1.10.15.40:FF:000001">
    <property type="entry name" value="Ion-translocating oxidoreductase complex subunit B"/>
    <property type="match status" value="1"/>
</dbReference>
<dbReference type="Gene3D" id="3.30.70.20">
    <property type="match status" value="1"/>
</dbReference>
<dbReference type="Gene3D" id="1.10.15.40">
    <property type="entry name" value="Electron transport complex subunit B, putative Fe-S cluster"/>
    <property type="match status" value="1"/>
</dbReference>
<dbReference type="HAMAP" id="MF_00463">
    <property type="entry name" value="RsxB_RnfB"/>
    <property type="match status" value="1"/>
</dbReference>
<dbReference type="InterPro" id="IPR007202">
    <property type="entry name" value="4Fe-4S_dom"/>
</dbReference>
<dbReference type="InterPro" id="IPR017896">
    <property type="entry name" value="4Fe4S_Fe-S-bd"/>
</dbReference>
<dbReference type="InterPro" id="IPR017900">
    <property type="entry name" value="4Fe4S_Fe_S_CS"/>
</dbReference>
<dbReference type="InterPro" id="IPR050395">
    <property type="entry name" value="4Fe4S_Ferredoxin_RnfB"/>
</dbReference>
<dbReference type="InterPro" id="IPR010207">
    <property type="entry name" value="Elect_transpt_cplx_RnfB/RsxB"/>
</dbReference>
<dbReference type="InterPro" id="IPR016463">
    <property type="entry name" value="RnfB/RsxB_Proteobac"/>
</dbReference>
<dbReference type="NCBIfam" id="NF003475">
    <property type="entry name" value="PRK05113.1"/>
    <property type="match status" value="1"/>
</dbReference>
<dbReference type="NCBIfam" id="TIGR01944">
    <property type="entry name" value="rnfB"/>
    <property type="match status" value="1"/>
</dbReference>
<dbReference type="PANTHER" id="PTHR43560">
    <property type="entry name" value="ION-TRANSLOCATING OXIDOREDUCTASE COMPLEX SUBUNIT B"/>
    <property type="match status" value="1"/>
</dbReference>
<dbReference type="PANTHER" id="PTHR43560:SF1">
    <property type="entry name" value="ION-TRANSLOCATING OXIDOREDUCTASE COMPLEX SUBUNIT B"/>
    <property type="match status" value="1"/>
</dbReference>
<dbReference type="Pfam" id="PF14697">
    <property type="entry name" value="Fer4_21"/>
    <property type="match status" value="1"/>
</dbReference>
<dbReference type="Pfam" id="PF04060">
    <property type="entry name" value="FeS"/>
    <property type="match status" value="1"/>
</dbReference>
<dbReference type="PIRSF" id="PIRSF005784">
    <property type="entry name" value="Elect_transpt_RnfB"/>
    <property type="match status" value="1"/>
</dbReference>
<dbReference type="SUPFAM" id="SSF54862">
    <property type="entry name" value="4Fe-4S ferredoxins"/>
    <property type="match status" value="1"/>
</dbReference>
<dbReference type="PROSITE" id="PS51656">
    <property type="entry name" value="4FE4S"/>
    <property type="match status" value="1"/>
</dbReference>
<dbReference type="PROSITE" id="PS00198">
    <property type="entry name" value="4FE4S_FER_1"/>
    <property type="match status" value="2"/>
</dbReference>
<dbReference type="PROSITE" id="PS51379">
    <property type="entry name" value="4FE4S_FER_2"/>
    <property type="match status" value="2"/>
</dbReference>
<keyword id="KW-0004">4Fe-4S</keyword>
<keyword id="KW-0997">Cell inner membrane</keyword>
<keyword id="KW-1003">Cell membrane</keyword>
<keyword id="KW-0249">Electron transport</keyword>
<keyword id="KW-0408">Iron</keyword>
<keyword id="KW-0411">Iron-sulfur</keyword>
<keyword id="KW-0472">Membrane</keyword>
<keyword id="KW-0479">Metal-binding</keyword>
<keyword id="KW-1185">Reference proteome</keyword>
<keyword id="KW-0677">Repeat</keyword>
<keyword id="KW-1278">Translocase</keyword>
<keyword id="KW-0813">Transport</keyword>